<evidence type="ECO:0000255" key="1">
    <source>
        <dbReference type="HAMAP-Rule" id="MF_01656"/>
    </source>
</evidence>
<feature type="chain" id="PRO_0000387779" description="4-hydroxy-2-oxovalerate aldolase">
    <location>
        <begin position="1"/>
        <end position="342"/>
    </location>
</feature>
<feature type="domain" description="Pyruvate carboxyltransferase" evidence="1">
    <location>
        <begin position="7"/>
        <end position="259"/>
    </location>
</feature>
<feature type="active site" description="Proton acceptor" evidence="1">
    <location>
        <position position="19"/>
    </location>
</feature>
<feature type="binding site" evidence="1">
    <location>
        <begin position="15"/>
        <end position="16"/>
    </location>
    <ligand>
        <name>substrate</name>
    </ligand>
</feature>
<feature type="binding site" evidence="1">
    <location>
        <position position="16"/>
    </location>
    <ligand>
        <name>Mn(2+)</name>
        <dbReference type="ChEBI" id="CHEBI:29035"/>
    </ligand>
</feature>
<feature type="binding site" evidence="1">
    <location>
        <position position="169"/>
    </location>
    <ligand>
        <name>substrate</name>
    </ligand>
</feature>
<feature type="binding site" evidence="1">
    <location>
        <position position="198"/>
    </location>
    <ligand>
        <name>Mn(2+)</name>
        <dbReference type="ChEBI" id="CHEBI:29035"/>
    </ligand>
</feature>
<feature type="binding site" evidence="1">
    <location>
        <position position="198"/>
    </location>
    <ligand>
        <name>substrate</name>
    </ligand>
</feature>
<feature type="binding site" evidence="1">
    <location>
        <position position="200"/>
    </location>
    <ligand>
        <name>Mn(2+)</name>
        <dbReference type="ChEBI" id="CHEBI:29035"/>
    </ligand>
</feature>
<feature type="binding site" evidence="1">
    <location>
        <position position="289"/>
    </location>
    <ligand>
        <name>substrate</name>
    </ligand>
</feature>
<feature type="site" description="Transition state stabilizer" evidence="1">
    <location>
        <position position="15"/>
    </location>
</feature>
<keyword id="KW-0058">Aromatic hydrocarbons catabolism</keyword>
<keyword id="KW-0456">Lyase</keyword>
<keyword id="KW-0464">Manganese</keyword>
<keyword id="KW-0479">Metal-binding</keyword>
<keyword id="KW-1185">Reference proteome</keyword>
<gene>
    <name type="ordered locus">Mlg_2462</name>
</gene>
<organism>
    <name type="scientific">Alkalilimnicola ehrlichii (strain ATCC BAA-1101 / DSM 17681 / MLHE-1)</name>
    <dbReference type="NCBI Taxonomy" id="187272"/>
    <lineage>
        <taxon>Bacteria</taxon>
        <taxon>Pseudomonadati</taxon>
        <taxon>Pseudomonadota</taxon>
        <taxon>Gammaproteobacteria</taxon>
        <taxon>Chromatiales</taxon>
        <taxon>Ectothiorhodospiraceae</taxon>
        <taxon>Alkalilimnicola</taxon>
    </lineage>
</organism>
<protein>
    <recommendedName>
        <fullName evidence="1">4-hydroxy-2-oxovalerate aldolase</fullName>
        <shortName evidence="1">HOA</shortName>
        <ecNumber evidence="1">4.1.3.39</ecNumber>
    </recommendedName>
    <alternativeName>
        <fullName evidence="1">4-hydroxy-2-keto-pentanoic acid aldolase</fullName>
    </alternativeName>
    <alternativeName>
        <fullName evidence="1">4-hydroxy-2-oxopentanoate aldolase</fullName>
    </alternativeName>
</protein>
<name>HOA_ALKEH</name>
<proteinExistence type="inferred from homology"/>
<comment type="catalytic activity">
    <reaction evidence="1">
        <text>(S)-4-hydroxy-2-oxopentanoate = acetaldehyde + pyruvate</text>
        <dbReference type="Rhea" id="RHEA:22624"/>
        <dbReference type="ChEBI" id="CHEBI:15343"/>
        <dbReference type="ChEBI" id="CHEBI:15361"/>
        <dbReference type="ChEBI" id="CHEBI:73143"/>
        <dbReference type="EC" id="4.1.3.39"/>
    </reaction>
</comment>
<comment type="similarity">
    <text evidence="1">Belongs to the 4-hydroxy-2-oxovalerate aldolase family.</text>
</comment>
<dbReference type="EC" id="4.1.3.39" evidence="1"/>
<dbReference type="EMBL" id="CP000453">
    <property type="protein sequence ID" value="ABI57802.1"/>
    <property type="molecule type" value="Genomic_DNA"/>
</dbReference>
<dbReference type="RefSeq" id="WP_011630195.1">
    <property type="nucleotide sequence ID" value="NC_008340.1"/>
</dbReference>
<dbReference type="SMR" id="Q0A5T5"/>
<dbReference type="KEGG" id="aeh:Mlg_2462"/>
<dbReference type="eggNOG" id="COG0119">
    <property type="taxonomic scope" value="Bacteria"/>
</dbReference>
<dbReference type="HOGENOM" id="CLU_049173_0_0_6"/>
<dbReference type="OrthoDB" id="9803573at2"/>
<dbReference type="Proteomes" id="UP000001962">
    <property type="component" value="Chromosome"/>
</dbReference>
<dbReference type="GO" id="GO:0003852">
    <property type="term" value="F:2-isopropylmalate synthase activity"/>
    <property type="evidence" value="ECO:0007669"/>
    <property type="project" value="TreeGrafter"/>
</dbReference>
<dbReference type="GO" id="GO:0008701">
    <property type="term" value="F:4-hydroxy-2-oxovalerate aldolase activity"/>
    <property type="evidence" value="ECO:0007669"/>
    <property type="project" value="UniProtKB-UniRule"/>
</dbReference>
<dbReference type="GO" id="GO:0030145">
    <property type="term" value="F:manganese ion binding"/>
    <property type="evidence" value="ECO:0007669"/>
    <property type="project" value="UniProtKB-UniRule"/>
</dbReference>
<dbReference type="GO" id="GO:0009056">
    <property type="term" value="P:catabolic process"/>
    <property type="evidence" value="ECO:0007669"/>
    <property type="project" value="UniProtKB-KW"/>
</dbReference>
<dbReference type="GO" id="GO:0009098">
    <property type="term" value="P:L-leucine biosynthetic process"/>
    <property type="evidence" value="ECO:0007669"/>
    <property type="project" value="TreeGrafter"/>
</dbReference>
<dbReference type="CDD" id="cd07943">
    <property type="entry name" value="DRE_TIM_HOA"/>
    <property type="match status" value="1"/>
</dbReference>
<dbReference type="Gene3D" id="1.10.8.60">
    <property type="match status" value="1"/>
</dbReference>
<dbReference type="Gene3D" id="3.20.20.70">
    <property type="entry name" value="Aldolase class I"/>
    <property type="match status" value="1"/>
</dbReference>
<dbReference type="HAMAP" id="MF_01656">
    <property type="entry name" value="HOA"/>
    <property type="match status" value="1"/>
</dbReference>
<dbReference type="InterPro" id="IPR050073">
    <property type="entry name" value="2-IPM_HCS-like"/>
</dbReference>
<dbReference type="InterPro" id="IPR017629">
    <property type="entry name" value="4OH_2_O-val_aldolase"/>
</dbReference>
<dbReference type="InterPro" id="IPR013785">
    <property type="entry name" value="Aldolase_TIM"/>
</dbReference>
<dbReference type="InterPro" id="IPR012425">
    <property type="entry name" value="DmpG_comm"/>
</dbReference>
<dbReference type="InterPro" id="IPR035685">
    <property type="entry name" value="DRE_TIM_HOA"/>
</dbReference>
<dbReference type="InterPro" id="IPR000891">
    <property type="entry name" value="PYR_CT"/>
</dbReference>
<dbReference type="NCBIfam" id="TIGR03217">
    <property type="entry name" value="4OH_2_O_val_ald"/>
    <property type="match status" value="1"/>
</dbReference>
<dbReference type="NCBIfam" id="NF006049">
    <property type="entry name" value="PRK08195.1"/>
    <property type="match status" value="1"/>
</dbReference>
<dbReference type="PANTHER" id="PTHR10277:SF9">
    <property type="entry name" value="2-ISOPROPYLMALATE SYNTHASE 1, CHLOROPLASTIC-RELATED"/>
    <property type="match status" value="1"/>
</dbReference>
<dbReference type="PANTHER" id="PTHR10277">
    <property type="entry name" value="HOMOCITRATE SYNTHASE-RELATED"/>
    <property type="match status" value="1"/>
</dbReference>
<dbReference type="Pfam" id="PF07836">
    <property type="entry name" value="DmpG_comm"/>
    <property type="match status" value="1"/>
</dbReference>
<dbReference type="Pfam" id="PF00682">
    <property type="entry name" value="HMGL-like"/>
    <property type="match status" value="1"/>
</dbReference>
<dbReference type="SUPFAM" id="SSF51569">
    <property type="entry name" value="Aldolase"/>
    <property type="match status" value="1"/>
</dbReference>
<dbReference type="SUPFAM" id="SSF89000">
    <property type="entry name" value="post-HMGL domain-like"/>
    <property type="match status" value="1"/>
</dbReference>
<dbReference type="PROSITE" id="PS50991">
    <property type="entry name" value="PYR_CT"/>
    <property type="match status" value="1"/>
</dbReference>
<sequence>MTDKKEILVHDMSLRDGMHSVRHQFSLAQMIELSTALDEAGVPLIEVTHGDGLGGHSVNYGFAAHSDREYLEAVIPRMQQARVSALLLPGIGTVDDLRMAADCGVHCLRVATQCTEADVAEQHIGLSRKLGLDTVGFLMMAHMLPAEGLLEQARLMESYGANCVYMTDSAGYMLPEEVREKVSALREGLADETEVGFHGHHNLAMGVANSVAAVEAGAKRIDGSVAGFGAGAGNTPLEVFIAVCERMGICTGVDLGRIQDVAEDVALPMMDAPTRIDRDSLTLGYAGVYSSFLLHAKRAEANHGVPARDILVELGARRTVGGQEDMIEDVALEMSRARSASA</sequence>
<accession>Q0A5T5</accession>
<reference key="1">
    <citation type="submission" date="2006-08" db="EMBL/GenBank/DDBJ databases">
        <title>Complete sequence of Alkalilimnicola ehrilichei MLHE-1.</title>
        <authorList>
            <person name="Copeland A."/>
            <person name="Lucas S."/>
            <person name="Lapidus A."/>
            <person name="Barry K."/>
            <person name="Detter J.C."/>
            <person name="Glavina del Rio T."/>
            <person name="Hammon N."/>
            <person name="Israni S."/>
            <person name="Dalin E."/>
            <person name="Tice H."/>
            <person name="Pitluck S."/>
            <person name="Sims D."/>
            <person name="Brettin T."/>
            <person name="Bruce D."/>
            <person name="Han C."/>
            <person name="Tapia R."/>
            <person name="Gilna P."/>
            <person name="Schmutz J."/>
            <person name="Larimer F."/>
            <person name="Land M."/>
            <person name="Hauser L."/>
            <person name="Kyrpides N."/>
            <person name="Mikhailova N."/>
            <person name="Oremland R.S."/>
            <person name="Hoeft S.E."/>
            <person name="Switzer-Blum J."/>
            <person name="Kulp T."/>
            <person name="King G."/>
            <person name="Tabita R."/>
            <person name="Witte B."/>
            <person name="Santini J.M."/>
            <person name="Basu P."/>
            <person name="Hollibaugh J.T."/>
            <person name="Xie G."/>
            <person name="Stolz J.F."/>
            <person name="Richardson P."/>
        </authorList>
    </citation>
    <scope>NUCLEOTIDE SEQUENCE [LARGE SCALE GENOMIC DNA]</scope>
    <source>
        <strain>ATCC BAA-1101 / DSM 17681 / MLHE-1</strain>
    </source>
</reference>